<dbReference type="EC" id="2.7.7.6" evidence="1"/>
<dbReference type="EMBL" id="CP000697">
    <property type="protein sequence ID" value="ABQ31153.1"/>
    <property type="molecule type" value="Genomic_DNA"/>
</dbReference>
<dbReference type="RefSeq" id="WP_012039722.1">
    <property type="nucleotide sequence ID" value="NC_009484.1"/>
</dbReference>
<dbReference type="SMR" id="A5FZX1"/>
<dbReference type="STRING" id="349163.Acry_1952"/>
<dbReference type="KEGG" id="acr:Acry_1952"/>
<dbReference type="eggNOG" id="COG0085">
    <property type="taxonomic scope" value="Bacteria"/>
</dbReference>
<dbReference type="HOGENOM" id="CLU_000524_4_0_5"/>
<dbReference type="Proteomes" id="UP000000245">
    <property type="component" value="Chromosome"/>
</dbReference>
<dbReference type="GO" id="GO:0000428">
    <property type="term" value="C:DNA-directed RNA polymerase complex"/>
    <property type="evidence" value="ECO:0007669"/>
    <property type="project" value="UniProtKB-KW"/>
</dbReference>
<dbReference type="GO" id="GO:0003677">
    <property type="term" value="F:DNA binding"/>
    <property type="evidence" value="ECO:0007669"/>
    <property type="project" value="UniProtKB-UniRule"/>
</dbReference>
<dbReference type="GO" id="GO:0003899">
    <property type="term" value="F:DNA-directed RNA polymerase activity"/>
    <property type="evidence" value="ECO:0007669"/>
    <property type="project" value="UniProtKB-UniRule"/>
</dbReference>
<dbReference type="GO" id="GO:0032549">
    <property type="term" value="F:ribonucleoside binding"/>
    <property type="evidence" value="ECO:0007669"/>
    <property type="project" value="InterPro"/>
</dbReference>
<dbReference type="GO" id="GO:0006351">
    <property type="term" value="P:DNA-templated transcription"/>
    <property type="evidence" value="ECO:0007669"/>
    <property type="project" value="UniProtKB-UniRule"/>
</dbReference>
<dbReference type="CDD" id="cd00653">
    <property type="entry name" value="RNA_pol_B_RPB2"/>
    <property type="match status" value="1"/>
</dbReference>
<dbReference type="FunFam" id="3.90.1800.10:FF:000001">
    <property type="entry name" value="DNA-directed RNA polymerase subunit beta"/>
    <property type="match status" value="1"/>
</dbReference>
<dbReference type="Gene3D" id="2.40.50.100">
    <property type="match status" value="1"/>
</dbReference>
<dbReference type="Gene3D" id="2.40.50.150">
    <property type="match status" value="1"/>
</dbReference>
<dbReference type="Gene3D" id="3.90.1100.10">
    <property type="match status" value="2"/>
</dbReference>
<dbReference type="Gene3D" id="2.30.150.10">
    <property type="entry name" value="DNA-directed RNA polymerase, beta subunit, external 1 domain"/>
    <property type="match status" value="1"/>
</dbReference>
<dbReference type="Gene3D" id="2.40.270.10">
    <property type="entry name" value="DNA-directed RNA polymerase, subunit 2, domain 6"/>
    <property type="match status" value="1"/>
</dbReference>
<dbReference type="Gene3D" id="3.90.1800.10">
    <property type="entry name" value="RNA polymerase alpha subunit dimerisation domain"/>
    <property type="match status" value="1"/>
</dbReference>
<dbReference type="Gene3D" id="3.90.1110.10">
    <property type="entry name" value="RNA polymerase Rpb2, domain 2"/>
    <property type="match status" value="1"/>
</dbReference>
<dbReference type="HAMAP" id="MF_01321">
    <property type="entry name" value="RNApol_bact_RpoB"/>
    <property type="match status" value="1"/>
</dbReference>
<dbReference type="InterPro" id="IPR042107">
    <property type="entry name" value="DNA-dir_RNA_pol_bsu_ext_1_sf"/>
</dbReference>
<dbReference type="InterPro" id="IPR019462">
    <property type="entry name" value="DNA-dir_RNA_pol_bsu_external_1"/>
</dbReference>
<dbReference type="InterPro" id="IPR015712">
    <property type="entry name" value="DNA-dir_RNA_pol_su2"/>
</dbReference>
<dbReference type="InterPro" id="IPR007120">
    <property type="entry name" value="DNA-dir_RNAP_su2_dom"/>
</dbReference>
<dbReference type="InterPro" id="IPR037033">
    <property type="entry name" value="DNA-dir_RNAP_su2_hyb_sf"/>
</dbReference>
<dbReference type="InterPro" id="IPR010243">
    <property type="entry name" value="RNA_pol_bsu_bac"/>
</dbReference>
<dbReference type="InterPro" id="IPR007121">
    <property type="entry name" value="RNA_pol_bsu_CS"/>
</dbReference>
<dbReference type="InterPro" id="IPR007644">
    <property type="entry name" value="RNA_pol_bsu_protrusion"/>
</dbReference>
<dbReference type="InterPro" id="IPR007642">
    <property type="entry name" value="RNA_pol_Rpb2_2"/>
</dbReference>
<dbReference type="InterPro" id="IPR037034">
    <property type="entry name" value="RNA_pol_Rpb2_2_sf"/>
</dbReference>
<dbReference type="InterPro" id="IPR007645">
    <property type="entry name" value="RNA_pol_Rpb2_3"/>
</dbReference>
<dbReference type="InterPro" id="IPR007641">
    <property type="entry name" value="RNA_pol_Rpb2_7"/>
</dbReference>
<dbReference type="InterPro" id="IPR014724">
    <property type="entry name" value="RNA_pol_RPB2_OB-fold"/>
</dbReference>
<dbReference type="NCBIfam" id="NF001616">
    <property type="entry name" value="PRK00405.1"/>
    <property type="match status" value="1"/>
</dbReference>
<dbReference type="NCBIfam" id="TIGR02013">
    <property type="entry name" value="rpoB"/>
    <property type="match status" value="1"/>
</dbReference>
<dbReference type="PANTHER" id="PTHR20856">
    <property type="entry name" value="DNA-DIRECTED RNA POLYMERASE I SUBUNIT 2"/>
    <property type="match status" value="1"/>
</dbReference>
<dbReference type="Pfam" id="PF04563">
    <property type="entry name" value="RNA_pol_Rpb2_1"/>
    <property type="match status" value="1"/>
</dbReference>
<dbReference type="Pfam" id="PF04561">
    <property type="entry name" value="RNA_pol_Rpb2_2"/>
    <property type="match status" value="1"/>
</dbReference>
<dbReference type="Pfam" id="PF04565">
    <property type="entry name" value="RNA_pol_Rpb2_3"/>
    <property type="match status" value="1"/>
</dbReference>
<dbReference type="Pfam" id="PF10385">
    <property type="entry name" value="RNA_pol_Rpb2_45"/>
    <property type="match status" value="1"/>
</dbReference>
<dbReference type="Pfam" id="PF00562">
    <property type="entry name" value="RNA_pol_Rpb2_6"/>
    <property type="match status" value="1"/>
</dbReference>
<dbReference type="Pfam" id="PF04560">
    <property type="entry name" value="RNA_pol_Rpb2_7"/>
    <property type="match status" value="1"/>
</dbReference>
<dbReference type="SUPFAM" id="SSF64484">
    <property type="entry name" value="beta and beta-prime subunits of DNA dependent RNA-polymerase"/>
    <property type="match status" value="1"/>
</dbReference>
<dbReference type="PROSITE" id="PS01166">
    <property type="entry name" value="RNA_POL_BETA"/>
    <property type="match status" value="1"/>
</dbReference>
<reference key="1">
    <citation type="submission" date="2007-05" db="EMBL/GenBank/DDBJ databases">
        <title>Complete sequence of chromosome of Acidiphilium cryptum JF-5.</title>
        <authorList>
            <consortium name="US DOE Joint Genome Institute"/>
            <person name="Copeland A."/>
            <person name="Lucas S."/>
            <person name="Lapidus A."/>
            <person name="Barry K."/>
            <person name="Detter J.C."/>
            <person name="Glavina del Rio T."/>
            <person name="Hammon N."/>
            <person name="Israni S."/>
            <person name="Dalin E."/>
            <person name="Tice H."/>
            <person name="Pitluck S."/>
            <person name="Sims D."/>
            <person name="Brettin T."/>
            <person name="Bruce D."/>
            <person name="Han C."/>
            <person name="Schmutz J."/>
            <person name="Larimer F."/>
            <person name="Land M."/>
            <person name="Hauser L."/>
            <person name="Kyrpides N."/>
            <person name="Kim E."/>
            <person name="Magnuson T."/>
            <person name="Richardson P."/>
        </authorList>
    </citation>
    <scope>NUCLEOTIDE SEQUENCE [LARGE SCALE GENOMIC DNA]</scope>
    <source>
        <strain>JF-5</strain>
    </source>
</reference>
<comment type="function">
    <text evidence="1">DNA-dependent RNA polymerase catalyzes the transcription of DNA into RNA using the four ribonucleoside triphosphates as substrates.</text>
</comment>
<comment type="catalytic activity">
    <reaction evidence="1">
        <text>RNA(n) + a ribonucleoside 5'-triphosphate = RNA(n+1) + diphosphate</text>
        <dbReference type="Rhea" id="RHEA:21248"/>
        <dbReference type="Rhea" id="RHEA-COMP:14527"/>
        <dbReference type="Rhea" id="RHEA-COMP:17342"/>
        <dbReference type="ChEBI" id="CHEBI:33019"/>
        <dbReference type="ChEBI" id="CHEBI:61557"/>
        <dbReference type="ChEBI" id="CHEBI:140395"/>
        <dbReference type="EC" id="2.7.7.6"/>
    </reaction>
</comment>
<comment type="subunit">
    <text evidence="1">The RNAP catalytic core consists of 2 alpha, 1 beta, 1 beta' and 1 omega subunit. When a sigma factor is associated with the core the holoenzyme is formed, which can initiate transcription.</text>
</comment>
<comment type="similarity">
    <text evidence="1">Belongs to the RNA polymerase beta chain family.</text>
</comment>
<name>RPOB_ACICJ</name>
<sequence>MNAISGGLNKVSFTNRKRIRKSFGRIPETTPMPNLIDVQRASYDAFLQMHVSPDSRTNSGLQEVFKSVFPIDDFAGRGRLEFVYYELEEPKYDVEECIQRGMTYAAPLKVVLRLIVWDVDEDTGARSIRDIKEQPVYMGDMPLMTDNGTFVVNGTERVIVSQMHRSPGVFFDHDKGKTHSSGKYLFAARVIPYRGSWLDFEFDAKDLIYVRIDRKRKLPVTTLLYALEGRATEALRAAREAKGESLEIGEIRGMDAEEILTYFYGKVPFTRTRTRDGETAWARPFEPETFRGAKLVEDLVDAETGEVVAKADDKLTARVARQIAVKTRTVLVSRADLIGRYVAEDLFDPNTGEIFADAGEEISEAKLKTFEDAGLDEIPTLAIDQAKGPWIRNTLAADKNASREDALIDIYRVIRPGEPPTSETAEALFRGLFFDAERYDLSAVGRVKMNMRLGLECEDTVRVLRKEDILRTIQIMCELKDGRGQVDDIDNLGNRRVRSVGELMENQYRIGLLRMERAIRERMGSVDIDGVMPHDLINAKPAAAAVREFFGSSQLSQFMDQTNPLSEVTHKRRLSALGPGGLTRERAGFEVRDVHPTHYGRICPIETPEGPNIGLINSLATFAKVNKYGFIETPYRLVKDGKVLDEYKYLSAMEEERLTVAQADAPKLADGTLTEDLVSVRRNGDFRLVKPDEVTAIDVSPRQLVSVAAALIPFLENDDANRALMGSNMQRQAVPLIKSDAPLVGTGMEAPVARDSGATIVARRAGVIDQIDGARIVVRATGEDGTTQGVDIYRLRKFMRSNQSTCINQRPLVRVGDRVGAGDIIADGPSTELGELALGRNVLCAFMPWNGYNFEDSILISERVAREDMFTSIHIEEFEVMARDTKLGQEEITRDIPNVGEEALRNLDEAGIVYIGAEVNPGDILVGKVTPKGESPMTPEEKLLRAIFGEKASDVRDTSLKLPPGVNGTVVDVRVFNRRGVDKDERALAIERAEIERLAKDRDDERAIQERAFLNRLREKLLGQVAGSGYKGVRSGTEITTELLAEIPRGAWRNLTVQDDRVMAEIETLKREFDASVHKLQQRFESKVEKLQRGDEMPPGVMKMVKVFIAVKRKLQPGDKMAGRHGNKGVVSKVVPIEDMPFLEDGTPVDVVLNPLGVPSRMNVGQILETHLGWACANLGRQIGEAVEAYQRDVAERERLHAMLKSVYGEEIYNEQIASMSDAELRELCGNIRKGVPIATPVFDGARITDIEDMLAKAGLDVSGQMTVCDGRTGEQFERKVTVGYMYMLKLGHMVDDKIHARSIGPYSLVTQQPLGGKAQFGGQRFGEMEVWALEAYGAAYTLQEMLTVKSDDVSGRTKVYEAIVREQDNFEAGVPESFNVLTKELKSLGLNVDLNLSVD</sequence>
<organism>
    <name type="scientific">Acidiphilium cryptum (strain JF-5)</name>
    <dbReference type="NCBI Taxonomy" id="349163"/>
    <lineage>
        <taxon>Bacteria</taxon>
        <taxon>Pseudomonadati</taxon>
        <taxon>Pseudomonadota</taxon>
        <taxon>Alphaproteobacteria</taxon>
        <taxon>Acetobacterales</taxon>
        <taxon>Acidocellaceae</taxon>
        <taxon>Acidiphilium</taxon>
    </lineage>
</organism>
<gene>
    <name evidence="1" type="primary">rpoB</name>
    <name type="ordered locus">Acry_1952</name>
</gene>
<feature type="chain" id="PRO_1000051959" description="DNA-directed RNA polymerase subunit beta">
    <location>
        <begin position="1"/>
        <end position="1400"/>
    </location>
</feature>
<keyword id="KW-0240">DNA-directed RNA polymerase</keyword>
<keyword id="KW-0548">Nucleotidyltransferase</keyword>
<keyword id="KW-1185">Reference proteome</keyword>
<keyword id="KW-0804">Transcription</keyword>
<keyword id="KW-0808">Transferase</keyword>
<accession>A5FZX1</accession>
<evidence type="ECO:0000255" key="1">
    <source>
        <dbReference type="HAMAP-Rule" id="MF_01321"/>
    </source>
</evidence>
<proteinExistence type="inferred from homology"/>
<protein>
    <recommendedName>
        <fullName evidence="1">DNA-directed RNA polymerase subunit beta</fullName>
        <shortName evidence="1">RNAP subunit beta</shortName>
        <ecNumber evidence="1">2.7.7.6</ecNumber>
    </recommendedName>
    <alternativeName>
        <fullName evidence="1">RNA polymerase subunit beta</fullName>
    </alternativeName>
    <alternativeName>
        <fullName evidence="1">Transcriptase subunit beta</fullName>
    </alternativeName>
</protein>